<evidence type="ECO:0000255" key="1">
    <source>
        <dbReference type="HAMAP-Rule" id="MF_01204"/>
    </source>
</evidence>
<protein>
    <recommendedName>
        <fullName evidence="1">Putative NADH dehydrogenase/NAD(P)H nitroreductase Reut_A1586</fullName>
        <ecNumber evidence="1">1.-.-.-</ecNumber>
    </recommendedName>
</protein>
<keyword id="KW-0285">Flavoprotein</keyword>
<keyword id="KW-0288">FMN</keyword>
<keyword id="KW-0520">NAD</keyword>
<keyword id="KW-0521">NADP</keyword>
<keyword id="KW-0560">Oxidoreductase</keyword>
<accession>Q471I1</accession>
<reference key="1">
    <citation type="journal article" date="2010" name="PLoS ONE">
        <title>The complete multipartite genome sequence of Cupriavidus necator JMP134, a versatile pollutant degrader.</title>
        <authorList>
            <person name="Lykidis A."/>
            <person name="Perez-Pantoja D."/>
            <person name="Ledger T."/>
            <person name="Mavromatis K."/>
            <person name="Anderson I.J."/>
            <person name="Ivanova N.N."/>
            <person name="Hooper S.D."/>
            <person name="Lapidus A."/>
            <person name="Lucas S."/>
            <person name="Gonzalez B."/>
            <person name="Kyrpides N.C."/>
        </authorList>
    </citation>
    <scope>NUCLEOTIDE SEQUENCE [LARGE SCALE GENOMIC DNA]</scope>
    <source>
        <strain>JMP134 / LMG 1197</strain>
    </source>
</reference>
<organism>
    <name type="scientific">Cupriavidus pinatubonensis (strain JMP 134 / LMG 1197)</name>
    <name type="common">Cupriavidus necator (strain JMP 134)</name>
    <dbReference type="NCBI Taxonomy" id="264198"/>
    <lineage>
        <taxon>Bacteria</taxon>
        <taxon>Pseudomonadati</taxon>
        <taxon>Pseudomonadota</taxon>
        <taxon>Betaproteobacteria</taxon>
        <taxon>Burkholderiales</taxon>
        <taxon>Burkholderiaceae</taxon>
        <taxon>Cupriavidus</taxon>
    </lineage>
</organism>
<gene>
    <name type="ordered locus">Reut_A1586</name>
</gene>
<comment type="cofactor">
    <cofactor evidence="1">
        <name>FMN</name>
        <dbReference type="ChEBI" id="CHEBI:58210"/>
    </cofactor>
</comment>
<comment type="similarity">
    <text evidence="1">Belongs to the nitroreductase family. HadB/RutE subfamily.</text>
</comment>
<feature type="chain" id="PRO_1000066144" description="Putative NADH dehydrogenase/NAD(P)H nitroreductase Reut_A1586">
    <location>
        <begin position="1"/>
        <end position="196"/>
    </location>
</feature>
<sequence>MQTNELLDKIFRGARSQNGWLPTPVPDSKLRELYDLMKFGPTSVNCSPARLVFVRTEEGREKLRPALAPGNVEKTMAAPVVAIVGYDTRFYEQLPDLFPHNPAVKAWFEGDEKVDFANTTAFRNGTLQGGYLIAAARALGLDCGPMSGFNNQAIDQAFFAGTSIRSNFICGLGHGDPEKVFARSPRLSFEQACQLA</sequence>
<name>Y1586_CUPPJ</name>
<dbReference type="EC" id="1.-.-.-" evidence="1"/>
<dbReference type="EMBL" id="CP000090">
    <property type="protein sequence ID" value="AAZ60952.1"/>
    <property type="molecule type" value="Genomic_DNA"/>
</dbReference>
<dbReference type="SMR" id="Q471I1"/>
<dbReference type="STRING" id="264198.Reut_A1586"/>
<dbReference type="DNASU" id="3610762"/>
<dbReference type="KEGG" id="reu:Reut_A1586"/>
<dbReference type="eggNOG" id="COG0778">
    <property type="taxonomic scope" value="Bacteria"/>
</dbReference>
<dbReference type="HOGENOM" id="CLU_084441_0_0_4"/>
<dbReference type="GO" id="GO:0016491">
    <property type="term" value="F:oxidoreductase activity"/>
    <property type="evidence" value="ECO:0007669"/>
    <property type="project" value="UniProtKB-UniRule"/>
</dbReference>
<dbReference type="CDD" id="cd02148">
    <property type="entry name" value="RutE-like"/>
    <property type="match status" value="1"/>
</dbReference>
<dbReference type="Gene3D" id="3.40.109.10">
    <property type="entry name" value="NADH Oxidase"/>
    <property type="match status" value="1"/>
</dbReference>
<dbReference type="HAMAP" id="MF_01204">
    <property type="entry name" value="Oxidoreductase_RutE_HadB"/>
    <property type="match status" value="1"/>
</dbReference>
<dbReference type="InterPro" id="IPR029479">
    <property type="entry name" value="Nitroreductase"/>
</dbReference>
<dbReference type="InterPro" id="IPR000415">
    <property type="entry name" value="Nitroreductase-like"/>
</dbReference>
<dbReference type="InterPro" id="IPR050461">
    <property type="entry name" value="Nitroreductase_HadB/RutE"/>
</dbReference>
<dbReference type="InterPro" id="IPR023936">
    <property type="entry name" value="RutE-like"/>
</dbReference>
<dbReference type="NCBIfam" id="NF003768">
    <property type="entry name" value="PRK05365.1"/>
    <property type="match status" value="1"/>
</dbReference>
<dbReference type="PANTHER" id="PTHR43543">
    <property type="entry name" value="MALONIC SEMIALDEHYDE REDUCTASE RUTE-RELATED"/>
    <property type="match status" value="1"/>
</dbReference>
<dbReference type="PANTHER" id="PTHR43543:SF1">
    <property type="entry name" value="MALONIC SEMIALDEHYDE REDUCTASE RUTE-RELATED"/>
    <property type="match status" value="1"/>
</dbReference>
<dbReference type="Pfam" id="PF00881">
    <property type="entry name" value="Nitroreductase"/>
    <property type="match status" value="1"/>
</dbReference>
<dbReference type="SUPFAM" id="SSF55469">
    <property type="entry name" value="FMN-dependent nitroreductase-like"/>
    <property type="match status" value="1"/>
</dbReference>
<proteinExistence type="inferred from homology"/>